<keyword id="KW-0030">Aminoacyl-tRNA synthetase</keyword>
<keyword id="KW-0067">ATP-binding</keyword>
<keyword id="KW-0963">Cytoplasm</keyword>
<keyword id="KW-0436">Ligase</keyword>
<keyword id="KW-0479">Metal-binding</keyword>
<keyword id="KW-0547">Nucleotide-binding</keyword>
<keyword id="KW-0648">Protein biosynthesis</keyword>
<keyword id="KW-1185">Reference proteome</keyword>
<keyword id="KW-0694">RNA-binding</keyword>
<keyword id="KW-0820">tRNA-binding</keyword>
<keyword id="KW-0862">Zinc</keyword>
<protein>
    <recommendedName>
        <fullName evidence="1">Alanine--tRNA ligase</fullName>
        <ecNumber evidence="1">6.1.1.7</ecNumber>
    </recommendedName>
    <alternativeName>
        <fullName evidence="1">Alanyl-tRNA synthetase</fullName>
        <shortName evidence="1">AlaRS</shortName>
    </alternativeName>
</protein>
<reference key="1">
    <citation type="submission" date="2006-05" db="EMBL/GenBank/DDBJ databases">
        <title>Complete sequence of chromosome of Silicibacter sp. TM1040.</title>
        <authorList>
            <consortium name="US DOE Joint Genome Institute"/>
            <person name="Copeland A."/>
            <person name="Lucas S."/>
            <person name="Lapidus A."/>
            <person name="Barry K."/>
            <person name="Detter J.C."/>
            <person name="Glavina del Rio T."/>
            <person name="Hammon N."/>
            <person name="Israni S."/>
            <person name="Dalin E."/>
            <person name="Tice H."/>
            <person name="Pitluck S."/>
            <person name="Brettin T."/>
            <person name="Bruce D."/>
            <person name="Han C."/>
            <person name="Tapia R."/>
            <person name="Goodwin L."/>
            <person name="Thompson L.S."/>
            <person name="Gilna P."/>
            <person name="Schmutz J."/>
            <person name="Larimer F."/>
            <person name="Land M."/>
            <person name="Hauser L."/>
            <person name="Kyrpides N."/>
            <person name="Kim E."/>
            <person name="Belas R."/>
            <person name="Moran M.A."/>
            <person name="Buchan A."/>
            <person name="Gonzalez J.M."/>
            <person name="Schell M.A."/>
            <person name="Sun F."/>
            <person name="Richardson P."/>
        </authorList>
    </citation>
    <scope>NUCLEOTIDE SEQUENCE [LARGE SCALE GENOMIC DNA]</scope>
    <source>
        <strain>TM1040</strain>
    </source>
</reference>
<feature type="chain" id="PRO_0000347801" description="Alanine--tRNA ligase">
    <location>
        <begin position="1"/>
        <end position="883"/>
    </location>
</feature>
<feature type="binding site" evidence="1">
    <location>
        <position position="562"/>
    </location>
    <ligand>
        <name>Zn(2+)</name>
        <dbReference type="ChEBI" id="CHEBI:29105"/>
    </ligand>
</feature>
<feature type="binding site" evidence="1">
    <location>
        <position position="566"/>
    </location>
    <ligand>
        <name>Zn(2+)</name>
        <dbReference type="ChEBI" id="CHEBI:29105"/>
    </ligand>
</feature>
<feature type="binding site" evidence="1">
    <location>
        <position position="675"/>
    </location>
    <ligand>
        <name>Zn(2+)</name>
        <dbReference type="ChEBI" id="CHEBI:29105"/>
    </ligand>
</feature>
<feature type="binding site" evidence="1">
    <location>
        <position position="679"/>
    </location>
    <ligand>
        <name>Zn(2+)</name>
        <dbReference type="ChEBI" id="CHEBI:29105"/>
    </ligand>
</feature>
<organism>
    <name type="scientific">Ruegeria sp. (strain TM1040)</name>
    <name type="common">Silicibacter sp.</name>
    <dbReference type="NCBI Taxonomy" id="292414"/>
    <lineage>
        <taxon>Bacteria</taxon>
        <taxon>Pseudomonadati</taxon>
        <taxon>Pseudomonadota</taxon>
        <taxon>Alphaproteobacteria</taxon>
        <taxon>Rhodobacterales</taxon>
        <taxon>Roseobacteraceae</taxon>
        <taxon>Ruegeria</taxon>
    </lineage>
</organism>
<comment type="function">
    <text evidence="1">Catalyzes the attachment of alanine to tRNA(Ala) in a two-step reaction: alanine is first activated by ATP to form Ala-AMP and then transferred to the acceptor end of tRNA(Ala). Also edits incorrectly charged Ser-tRNA(Ala) and Gly-tRNA(Ala) via its editing domain.</text>
</comment>
<comment type="catalytic activity">
    <reaction evidence="1">
        <text>tRNA(Ala) + L-alanine + ATP = L-alanyl-tRNA(Ala) + AMP + diphosphate</text>
        <dbReference type="Rhea" id="RHEA:12540"/>
        <dbReference type="Rhea" id="RHEA-COMP:9657"/>
        <dbReference type="Rhea" id="RHEA-COMP:9923"/>
        <dbReference type="ChEBI" id="CHEBI:30616"/>
        <dbReference type="ChEBI" id="CHEBI:33019"/>
        <dbReference type="ChEBI" id="CHEBI:57972"/>
        <dbReference type="ChEBI" id="CHEBI:78442"/>
        <dbReference type="ChEBI" id="CHEBI:78497"/>
        <dbReference type="ChEBI" id="CHEBI:456215"/>
        <dbReference type="EC" id="6.1.1.7"/>
    </reaction>
</comment>
<comment type="cofactor">
    <cofactor evidence="1">
        <name>Zn(2+)</name>
        <dbReference type="ChEBI" id="CHEBI:29105"/>
    </cofactor>
    <text evidence="1">Binds 1 zinc ion per subunit.</text>
</comment>
<comment type="subcellular location">
    <subcellularLocation>
        <location evidence="1">Cytoplasm</location>
    </subcellularLocation>
</comment>
<comment type="domain">
    <text evidence="1">Consists of three domains; the N-terminal catalytic domain, the editing domain and the C-terminal C-Ala domain. The editing domain removes incorrectly charged amino acids, while the C-Ala domain, along with tRNA(Ala), serves as a bridge to cooperatively bring together the editing and aminoacylation centers thus stimulating deacylation of misacylated tRNAs.</text>
</comment>
<comment type="similarity">
    <text evidence="1">Belongs to the class-II aminoacyl-tRNA synthetase family.</text>
</comment>
<comment type="sequence caution" evidence="2">
    <conflict type="erroneous initiation">
        <sequence resource="EMBL-CDS" id="ABF63965"/>
    </conflict>
</comment>
<sequence>MPSLNDIRSTFLNYFAKQGHEVVDSSPLVPRNDPTLMFTNSGMVQFKNCFTGVDRRDYVRATTAQKCVRAGGKHNDLDNVGYTARHHTFFEMLGNFSFGDYFKNEAIPFAWELITGEFDIPKDKLYTTVYHTDDEAFEIWKKVGVPEERIIRIATSDNFWQMGDTGPCGPCTEIFYDHGDHIWGGPPGSPEEDGDRFIEIWNLVFMQNERFADGSMVDLDMQSIDTGMGLERIAALLQGTHDNYETDLFKYLIEASATVTKSEPYGDQNVHHRVIADHLRSCSFLIAEGVLPSNEGRGYVLRRIMRRAMRHASLLGATDPVMHKLVPALVSQMGAAYPELGQGQALIEETFEQEETRFLKTLDRGLKLLDDASGDLEKGDVLPGETAFKLYDTFGFPLDLTQDALRAKGIEVDTDGFDAAMKAQKEQSRAGGIGLGDATDVKVYFDIVDAEGTTEFLGYETEKAEGQIVALVKDGARVDSAKAGESVQIILNQTPFYGESGGQVGDSGMLTVEGGAARITDTKKVEGLFLHIAEVTEGEIAVGSGAAMEVDHVRRSQIRANHSATHLLHEALRNALGDHVAQKGSLNAADRLRFDFSHNKAVSAEDLSKISAEVNDFIRQNSAVSTRIMTPDDARALGAQALFGEKYGEEVRVVSMGRAPTGKGADGETYSIELCGGTHVKQTGDIGTFVILGDSASSAGVRRIEALTGAAAFAHLEREAGRMAEVAASLKAQPADVMERLKALMDERKALQNEIATLKQQIAMGGGAGGGAEAKEIGGKTFLGQALQGVSGKDLRGLIDAHKQKIGSGVILLIAEDDGKVAVAAGVTDDLTGEISAVDVLKAAVPAVGGKGGGGRPDMAQGGGKDFSGADEAIKAAEALLKG</sequence>
<name>SYA_RUEST</name>
<gene>
    <name evidence="1" type="primary">alaS</name>
    <name type="ordered locus">TM1040_1232</name>
</gene>
<evidence type="ECO:0000255" key="1">
    <source>
        <dbReference type="HAMAP-Rule" id="MF_00036"/>
    </source>
</evidence>
<evidence type="ECO:0000305" key="2"/>
<proteinExistence type="inferred from homology"/>
<accession>Q1GHA1</accession>
<dbReference type="EC" id="6.1.1.7" evidence="1"/>
<dbReference type="EMBL" id="CP000377">
    <property type="protein sequence ID" value="ABF63965.1"/>
    <property type="status" value="ALT_INIT"/>
    <property type="molecule type" value="Genomic_DNA"/>
</dbReference>
<dbReference type="RefSeq" id="WP_044027096.1">
    <property type="nucleotide sequence ID" value="NC_008044.1"/>
</dbReference>
<dbReference type="SMR" id="Q1GHA1"/>
<dbReference type="STRING" id="292414.TM1040_1232"/>
<dbReference type="KEGG" id="sit:TM1040_1232"/>
<dbReference type="eggNOG" id="COG0013">
    <property type="taxonomic scope" value="Bacteria"/>
</dbReference>
<dbReference type="HOGENOM" id="CLU_004485_1_1_5"/>
<dbReference type="OrthoDB" id="9803884at2"/>
<dbReference type="Proteomes" id="UP000000636">
    <property type="component" value="Chromosome"/>
</dbReference>
<dbReference type="GO" id="GO:0005829">
    <property type="term" value="C:cytosol"/>
    <property type="evidence" value="ECO:0007669"/>
    <property type="project" value="TreeGrafter"/>
</dbReference>
<dbReference type="GO" id="GO:0004813">
    <property type="term" value="F:alanine-tRNA ligase activity"/>
    <property type="evidence" value="ECO:0007669"/>
    <property type="project" value="UniProtKB-UniRule"/>
</dbReference>
<dbReference type="GO" id="GO:0002161">
    <property type="term" value="F:aminoacyl-tRNA deacylase activity"/>
    <property type="evidence" value="ECO:0007669"/>
    <property type="project" value="TreeGrafter"/>
</dbReference>
<dbReference type="GO" id="GO:0005524">
    <property type="term" value="F:ATP binding"/>
    <property type="evidence" value="ECO:0007669"/>
    <property type="project" value="UniProtKB-UniRule"/>
</dbReference>
<dbReference type="GO" id="GO:0000049">
    <property type="term" value="F:tRNA binding"/>
    <property type="evidence" value="ECO:0007669"/>
    <property type="project" value="UniProtKB-KW"/>
</dbReference>
<dbReference type="GO" id="GO:0008270">
    <property type="term" value="F:zinc ion binding"/>
    <property type="evidence" value="ECO:0007669"/>
    <property type="project" value="UniProtKB-UniRule"/>
</dbReference>
<dbReference type="GO" id="GO:0006419">
    <property type="term" value="P:alanyl-tRNA aminoacylation"/>
    <property type="evidence" value="ECO:0007669"/>
    <property type="project" value="UniProtKB-UniRule"/>
</dbReference>
<dbReference type="GO" id="GO:0045892">
    <property type="term" value="P:negative regulation of DNA-templated transcription"/>
    <property type="evidence" value="ECO:0007669"/>
    <property type="project" value="TreeGrafter"/>
</dbReference>
<dbReference type="CDD" id="cd00673">
    <property type="entry name" value="AlaRS_core"/>
    <property type="match status" value="1"/>
</dbReference>
<dbReference type="FunFam" id="2.40.30.130:FF:000001">
    <property type="entry name" value="Alanine--tRNA ligase"/>
    <property type="match status" value="1"/>
</dbReference>
<dbReference type="FunFam" id="3.10.310.40:FF:000001">
    <property type="entry name" value="Alanine--tRNA ligase"/>
    <property type="match status" value="1"/>
</dbReference>
<dbReference type="FunFam" id="3.30.54.20:FF:000001">
    <property type="entry name" value="Alanine--tRNA ligase"/>
    <property type="match status" value="1"/>
</dbReference>
<dbReference type="FunFam" id="3.30.930.10:FF:000004">
    <property type="entry name" value="Alanine--tRNA ligase"/>
    <property type="match status" value="1"/>
</dbReference>
<dbReference type="FunFam" id="3.30.980.10:FF:000004">
    <property type="entry name" value="Alanine--tRNA ligase, cytoplasmic"/>
    <property type="match status" value="1"/>
</dbReference>
<dbReference type="Gene3D" id="2.40.30.130">
    <property type="match status" value="1"/>
</dbReference>
<dbReference type="Gene3D" id="3.10.310.40">
    <property type="match status" value="1"/>
</dbReference>
<dbReference type="Gene3D" id="3.30.54.20">
    <property type="match status" value="1"/>
</dbReference>
<dbReference type="Gene3D" id="6.10.250.550">
    <property type="match status" value="1"/>
</dbReference>
<dbReference type="Gene3D" id="3.30.930.10">
    <property type="entry name" value="Bira Bifunctional Protein, Domain 2"/>
    <property type="match status" value="1"/>
</dbReference>
<dbReference type="Gene3D" id="3.30.980.10">
    <property type="entry name" value="Threonyl-trna Synthetase, Chain A, domain 2"/>
    <property type="match status" value="1"/>
</dbReference>
<dbReference type="HAMAP" id="MF_00036_B">
    <property type="entry name" value="Ala_tRNA_synth_B"/>
    <property type="match status" value="1"/>
</dbReference>
<dbReference type="InterPro" id="IPR045864">
    <property type="entry name" value="aa-tRNA-synth_II/BPL/LPL"/>
</dbReference>
<dbReference type="InterPro" id="IPR002318">
    <property type="entry name" value="Ala-tRNA-lgiase_IIc"/>
</dbReference>
<dbReference type="InterPro" id="IPR018162">
    <property type="entry name" value="Ala-tRNA-ligase_IIc_anticod-bd"/>
</dbReference>
<dbReference type="InterPro" id="IPR018165">
    <property type="entry name" value="Ala-tRNA-synth_IIc_core"/>
</dbReference>
<dbReference type="InterPro" id="IPR018164">
    <property type="entry name" value="Ala-tRNA-synth_IIc_N"/>
</dbReference>
<dbReference type="InterPro" id="IPR050058">
    <property type="entry name" value="Ala-tRNA_ligase"/>
</dbReference>
<dbReference type="InterPro" id="IPR023033">
    <property type="entry name" value="Ala_tRNA_ligase_euk/bac"/>
</dbReference>
<dbReference type="InterPro" id="IPR003156">
    <property type="entry name" value="DHHA1_dom"/>
</dbReference>
<dbReference type="InterPro" id="IPR018163">
    <property type="entry name" value="Thr/Ala-tRNA-synth_IIc_edit"/>
</dbReference>
<dbReference type="InterPro" id="IPR009000">
    <property type="entry name" value="Transl_B-barrel_sf"/>
</dbReference>
<dbReference type="InterPro" id="IPR012947">
    <property type="entry name" value="tRNA_SAD"/>
</dbReference>
<dbReference type="NCBIfam" id="TIGR00344">
    <property type="entry name" value="alaS"/>
    <property type="match status" value="1"/>
</dbReference>
<dbReference type="PANTHER" id="PTHR11777:SF9">
    <property type="entry name" value="ALANINE--TRNA LIGASE, CYTOPLASMIC"/>
    <property type="match status" value="1"/>
</dbReference>
<dbReference type="PANTHER" id="PTHR11777">
    <property type="entry name" value="ALANYL-TRNA SYNTHETASE"/>
    <property type="match status" value="1"/>
</dbReference>
<dbReference type="Pfam" id="PF02272">
    <property type="entry name" value="DHHA1"/>
    <property type="match status" value="1"/>
</dbReference>
<dbReference type="Pfam" id="PF01411">
    <property type="entry name" value="tRNA-synt_2c"/>
    <property type="match status" value="1"/>
</dbReference>
<dbReference type="Pfam" id="PF07973">
    <property type="entry name" value="tRNA_SAD"/>
    <property type="match status" value="1"/>
</dbReference>
<dbReference type="PRINTS" id="PR00980">
    <property type="entry name" value="TRNASYNTHALA"/>
</dbReference>
<dbReference type="SMART" id="SM00863">
    <property type="entry name" value="tRNA_SAD"/>
    <property type="match status" value="1"/>
</dbReference>
<dbReference type="SUPFAM" id="SSF55681">
    <property type="entry name" value="Class II aaRS and biotin synthetases"/>
    <property type="match status" value="1"/>
</dbReference>
<dbReference type="SUPFAM" id="SSF101353">
    <property type="entry name" value="Putative anticodon-binding domain of alanyl-tRNA synthetase (AlaRS)"/>
    <property type="match status" value="1"/>
</dbReference>
<dbReference type="SUPFAM" id="SSF55186">
    <property type="entry name" value="ThrRS/AlaRS common domain"/>
    <property type="match status" value="1"/>
</dbReference>
<dbReference type="SUPFAM" id="SSF50447">
    <property type="entry name" value="Translation proteins"/>
    <property type="match status" value="1"/>
</dbReference>
<dbReference type="PROSITE" id="PS50860">
    <property type="entry name" value="AA_TRNA_LIGASE_II_ALA"/>
    <property type="match status" value="1"/>
</dbReference>